<evidence type="ECO:0000256" key="1">
    <source>
        <dbReference type="SAM" id="MobiDB-lite"/>
    </source>
</evidence>
<dbReference type="EMBL" id="Z11679">
    <property type="protein sequence ID" value="CAA77741.1"/>
    <property type="molecule type" value="mRNA"/>
</dbReference>
<dbReference type="PIR" id="S28046">
    <property type="entry name" value="S28046"/>
</dbReference>
<dbReference type="SMR" id="P33191"/>
<dbReference type="InParanoid" id="P33191"/>
<dbReference type="Proteomes" id="UP000011115">
    <property type="component" value="Unassembled WGS sequence"/>
</dbReference>
<protein>
    <recommendedName>
        <fullName>Induced stolen tip protein TUB8</fullName>
    </recommendedName>
</protein>
<proteinExistence type="evidence at transcript level"/>
<comment type="tissue specificity">
    <text>Stolon, also expressed in leaves, stems and roots.</text>
</comment>
<comment type="developmental stage">
    <text>Transcribed in the stolon tip during the early stages of tuberization. Maximum expression was in non-swelling stolon tips from stage b, and level remained high as tuber increased in size.</text>
</comment>
<organism>
    <name type="scientific">Solanum tuberosum</name>
    <name type="common">Potato</name>
    <dbReference type="NCBI Taxonomy" id="4113"/>
    <lineage>
        <taxon>Eukaryota</taxon>
        <taxon>Viridiplantae</taxon>
        <taxon>Streptophyta</taxon>
        <taxon>Embryophyta</taxon>
        <taxon>Tracheophyta</taxon>
        <taxon>Spermatophyta</taxon>
        <taxon>Magnoliopsida</taxon>
        <taxon>eudicotyledons</taxon>
        <taxon>Gunneridae</taxon>
        <taxon>Pentapetalae</taxon>
        <taxon>asterids</taxon>
        <taxon>lamiids</taxon>
        <taxon>Solanales</taxon>
        <taxon>Solanaceae</taxon>
        <taxon>Solanoideae</taxon>
        <taxon>Solaneae</taxon>
        <taxon>Solanum</taxon>
    </lineage>
</organism>
<keyword id="KW-1185">Reference proteome</keyword>
<keyword id="KW-0677">Repeat</keyword>
<feature type="chain" id="PRO_0000065693" description="Induced stolen tip protein TUB8">
    <location>
        <begin position="1" status="less than"/>
        <end position="211"/>
    </location>
</feature>
<feature type="repeat" description="1; approximate">
    <location>
        <begin position="56"/>
        <end position="61"/>
    </location>
</feature>
<feature type="repeat" description="2; approximate">
    <location>
        <begin position="76"/>
        <end position="81"/>
    </location>
</feature>
<feature type="repeat" description="3; approximate">
    <location>
        <begin position="84"/>
        <end position="88"/>
    </location>
</feature>
<feature type="repeat" description="4">
    <location>
        <begin position="92"/>
        <end position="97"/>
    </location>
</feature>
<feature type="repeat" description="5; approximate">
    <location>
        <begin position="107"/>
        <end position="112"/>
    </location>
</feature>
<feature type="repeat" description="6">
    <location>
        <begin position="115"/>
        <end position="120"/>
    </location>
</feature>
<feature type="repeat" description="7">
    <location>
        <begin position="121"/>
        <end position="126"/>
    </location>
</feature>
<feature type="repeat" description="8; approximate">
    <location>
        <begin position="127"/>
        <end position="133"/>
    </location>
</feature>
<feature type="repeat" description="9; approximate">
    <location>
        <begin position="136"/>
        <end position="140"/>
    </location>
</feature>
<feature type="region of interest" description="9 X 6-7 AA repeats of E-E-P-A-A-A">
    <location>
        <begin position="56"/>
        <end position="141"/>
    </location>
</feature>
<feature type="region of interest" description="Disordered" evidence="1">
    <location>
        <begin position="114"/>
        <end position="167"/>
    </location>
</feature>
<feature type="compositionally biased region" description="Low complexity" evidence="1">
    <location>
        <begin position="114"/>
        <end position="152"/>
    </location>
</feature>
<feature type="non-terminal residue">
    <location>
        <position position="1"/>
    </location>
</feature>
<sequence length="211" mass="22638">FAPSISSFIFLFPIFLFFNFIPMASVEVESAPVAAVETTTPAEVEATPAPEVTKVEEPAPVVEKEVEVESAPAPVEEEAAPVAEEAAALVAEEPAAAEPTAAVAAAVEPVAAPVEEPAAAEEPAAAEEPVAAAPVEEAAAPKAEPEEAPVSEPEAEKAEEASPVSEEPEKVEEIIQWLMNDGFFFIIEVWLCLFSFLVEYFIYYYYYYILI</sequence>
<gene>
    <name type="primary">TUB8</name>
</gene>
<accession>P33191</accession>
<reference key="1">
    <citation type="journal article" date="1992" name="Plant Mol. Biol.">
        <title>Expression and sequence analysis of cDNAs induced during the early stages of tuberisation in different organs of the potato plant (Solanum tuberosum L.).</title>
        <authorList>
            <person name="Taylor M.A."/>
            <person name="Mad Arif S.A."/>
            <person name="Kumar A."/>
            <person name="Davies H.V."/>
            <person name="Scobie L.A."/>
            <person name="Pearce S.R."/>
            <person name="Flavell A.J."/>
        </authorList>
    </citation>
    <scope>NUCLEOTIDE SEQUENCE [MRNA]</scope>
    <source>
        <strain>cv. Record</strain>
        <tissue>Stolon tip</tissue>
    </source>
</reference>
<name>TUB8_SOLTU</name>